<dbReference type="EMBL" id="M27209">
    <property type="protein sequence ID" value="AAA34900.1"/>
    <property type="molecule type" value="Genomic_DNA"/>
</dbReference>
<dbReference type="EMBL" id="X71621">
    <property type="protein sequence ID" value="CAA50626.1"/>
    <property type="molecule type" value="Genomic_DNA"/>
</dbReference>
<dbReference type="EMBL" id="Z28045">
    <property type="protein sequence ID" value="CAA81880.1"/>
    <property type="molecule type" value="Genomic_DNA"/>
</dbReference>
<dbReference type="EMBL" id="BK006944">
    <property type="protein sequence ID" value="DAA09112.1"/>
    <property type="molecule type" value="Genomic_DNA"/>
</dbReference>
<dbReference type="PIR" id="A32497">
    <property type="entry name" value="A32497"/>
</dbReference>
<dbReference type="RefSeq" id="NP_012879.1">
    <property type="nucleotide sequence ID" value="NM_001179611.1"/>
</dbReference>
<dbReference type="PDB" id="3LGB">
    <property type="method" value="X-ray"/>
    <property type="resolution" value="1.54 A"/>
    <property type="chains" value="A/B=317-512"/>
</dbReference>
<dbReference type="PDB" id="6DTV">
    <property type="method" value="X-ray"/>
    <property type="resolution" value="1.12 A"/>
    <property type="chains" value="A=316-512"/>
</dbReference>
<dbReference type="PDB" id="6DTZ">
    <property type="method" value="X-ray"/>
    <property type="resolution" value="1.36 A"/>
    <property type="chains" value="A=316-512"/>
</dbReference>
<dbReference type="PDB" id="6DU0">
    <property type="method" value="X-ray"/>
    <property type="resolution" value="1.82 A"/>
    <property type="chains" value="A=316-512"/>
</dbReference>
<dbReference type="PDB" id="7TL2">
    <property type="method" value="X-ray"/>
    <property type="resolution" value="1.53 A"/>
    <property type="chains" value="A=316-512"/>
</dbReference>
<dbReference type="PDB" id="7TL3">
    <property type="method" value="X-ray"/>
    <property type="resolution" value="2.07 A"/>
    <property type="chains" value="A=316-512"/>
</dbReference>
<dbReference type="PDB" id="7TL4">
    <property type="method" value="X-ray"/>
    <property type="resolution" value="1.80 A"/>
    <property type="chains" value="A=316-512"/>
</dbReference>
<dbReference type="PDB" id="8B9A">
    <property type="method" value="EM"/>
    <property type="resolution" value="3.50 A"/>
    <property type="chains" value="A=1-528"/>
</dbReference>
<dbReference type="PDB" id="8B9B">
    <property type="method" value="EM"/>
    <property type="resolution" value="3.50 A"/>
    <property type="chains" value="A=1-528"/>
</dbReference>
<dbReference type="PDB" id="8B9C">
    <property type="method" value="EM"/>
    <property type="resolution" value="4.60 A"/>
    <property type="chains" value="A=1-528"/>
</dbReference>
<dbReference type="PDB" id="8FOC">
    <property type="method" value="EM"/>
    <property type="resolution" value="3.70 A"/>
    <property type="chains" value="B=1-528"/>
</dbReference>
<dbReference type="PDB" id="8FOD">
    <property type="method" value="EM"/>
    <property type="resolution" value="3.80 A"/>
    <property type="chains" value="B=1-528"/>
</dbReference>
<dbReference type="PDB" id="8FOE">
    <property type="method" value="EM"/>
    <property type="resolution" value="5.60 A"/>
    <property type="chains" value="B=1-528"/>
</dbReference>
<dbReference type="PDB" id="8FOH">
    <property type="method" value="EM"/>
    <property type="resolution" value="4.93 A"/>
    <property type="chains" value="B=1-528"/>
</dbReference>
<dbReference type="PDB" id="8FOJ">
    <property type="method" value="EM"/>
    <property type="resolution" value="4.80 A"/>
    <property type="chains" value="B=1-528"/>
</dbReference>
<dbReference type="PDB" id="8FOK">
    <property type="method" value="EM"/>
    <property type="resolution" value="3.56 A"/>
    <property type="chains" value="B=1-528"/>
</dbReference>
<dbReference type="PDBsum" id="3LGB"/>
<dbReference type="PDBsum" id="6DTV"/>
<dbReference type="PDBsum" id="6DTZ"/>
<dbReference type="PDBsum" id="6DU0"/>
<dbReference type="PDBsum" id="7TL2"/>
<dbReference type="PDBsum" id="7TL3"/>
<dbReference type="PDBsum" id="7TL4"/>
<dbReference type="PDBsum" id="8B9A"/>
<dbReference type="PDBsum" id="8B9B"/>
<dbReference type="PDBsum" id="8B9C"/>
<dbReference type="PDBsum" id="8FOC"/>
<dbReference type="PDBsum" id="8FOD"/>
<dbReference type="PDBsum" id="8FOE"/>
<dbReference type="PDBsum" id="8FOH"/>
<dbReference type="PDBsum" id="8FOJ"/>
<dbReference type="PDBsum" id="8FOK"/>
<dbReference type="EMDB" id="EMD-15924"/>
<dbReference type="SMR" id="P20457"/>
<dbReference type="BioGRID" id="34088">
    <property type="interactions" value="241"/>
</dbReference>
<dbReference type="ComplexPortal" id="CPX-2091">
    <property type="entry name" value="DNA polymerase alpha:primase complex"/>
</dbReference>
<dbReference type="DIP" id="DIP-2535N"/>
<dbReference type="FunCoup" id="P20457">
    <property type="interactions" value="1107"/>
</dbReference>
<dbReference type="IntAct" id="P20457">
    <property type="interactions" value="15"/>
</dbReference>
<dbReference type="MINT" id="P20457"/>
<dbReference type="STRING" id="4932.YKL045W"/>
<dbReference type="iPTMnet" id="P20457"/>
<dbReference type="PaxDb" id="4932-YKL045W"/>
<dbReference type="PeptideAtlas" id="P20457"/>
<dbReference type="EnsemblFungi" id="YKL045W_mRNA">
    <property type="protein sequence ID" value="YKL045W"/>
    <property type="gene ID" value="YKL045W"/>
</dbReference>
<dbReference type="GeneID" id="853821"/>
<dbReference type="KEGG" id="sce:YKL045W"/>
<dbReference type="AGR" id="SGD:S000001528"/>
<dbReference type="SGD" id="S000001528">
    <property type="gene designation" value="PRI2"/>
</dbReference>
<dbReference type="VEuPathDB" id="FungiDB:YKL045W"/>
<dbReference type="eggNOG" id="KOG2267">
    <property type="taxonomic scope" value="Eukaryota"/>
</dbReference>
<dbReference type="GeneTree" id="ENSGT00390000009790"/>
<dbReference type="HOGENOM" id="CLU_026253_1_0_1"/>
<dbReference type="InParanoid" id="P20457"/>
<dbReference type="OMA" id="RINYKPW"/>
<dbReference type="OrthoDB" id="421393at2759"/>
<dbReference type="BioCyc" id="YEAST:G3O-31846-MONOMER"/>
<dbReference type="Reactome" id="R-SCE-113501">
    <property type="pathway name" value="Inhibition of replication initiation of damaged DNA by RB1/E2F1"/>
</dbReference>
<dbReference type="Reactome" id="R-SCE-68952">
    <property type="pathway name" value="DNA replication initiation"/>
</dbReference>
<dbReference type="Reactome" id="R-SCE-68962">
    <property type="pathway name" value="Activation of the pre-replicative complex"/>
</dbReference>
<dbReference type="Reactome" id="R-SCE-69091">
    <property type="pathway name" value="Polymerase switching"/>
</dbReference>
<dbReference type="Reactome" id="R-SCE-69166">
    <property type="pathway name" value="Removal of the Flap Intermediate"/>
</dbReference>
<dbReference type="Reactome" id="R-SCE-69183">
    <property type="pathway name" value="Processive synthesis on the lagging strand"/>
</dbReference>
<dbReference type="BioGRID-ORCS" id="853821">
    <property type="hits" value="0 hits in 10 CRISPR screens"/>
</dbReference>
<dbReference type="EvolutionaryTrace" id="P20457"/>
<dbReference type="PRO" id="PR:P20457"/>
<dbReference type="Proteomes" id="UP000002311">
    <property type="component" value="Chromosome XI"/>
</dbReference>
<dbReference type="RNAct" id="P20457">
    <property type="molecule type" value="protein"/>
</dbReference>
<dbReference type="GO" id="GO:0005658">
    <property type="term" value="C:alpha DNA polymerase:primase complex"/>
    <property type="evidence" value="ECO:0000314"/>
    <property type="project" value="SGD"/>
</dbReference>
<dbReference type="GO" id="GO:0005635">
    <property type="term" value="C:nuclear envelope"/>
    <property type="evidence" value="ECO:0000314"/>
    <property type="project" value="SGD"/>
</dbReference>
<dbReference type="GO" id="GO:0005634">
    <property type="term" value="C:nucleus"/>
    <property type="evidence" value="ECO:0000314"/>
    <property type="project" value="SGD"/>
</dbReference>
<dbReference type="GO" id="GO:0051539">
    <property type="term" value="F:4 iron, 4 sulfur cluster binding"/>
    <property type="evidence" value="ECO:0007669"/>
    <property type="project" value="UniProtKB-KW"/>
</dbReference>
<dbReference type="GO" id="GO:0003677">
    <property type="term" value="F:DNA binding"/>
    <property type="evidence" value="ECO:0007669"/>
    <property type="project" value="UniProtKB-KW"/>
</dbReference>
<dbReference type="GO" id="GO:0046872">
    <property type="term" value="F:metal ion binding"/>
    <property type="evidence" value="ECO:0007669"/>
    <property type="project" value="UniProtKB-KW"/>
</dbReference>
<dbReference type="GO" id="GO:0006260">
    <property type="term" value="P:DNA replication"/>
    <property type="evidence" value="ECO:0000315"/>
    <property type="project" value="SGD"/>
</dbReference>
<dbReference type="GO" id="GO:0006270">
    <property type="term" value="P:DNA replication initiation"/>
    <property type="evidence" value="ECO:0000318"/>
    <property type="project" value="GO_Central"/>
</dbReference>
<dbReference type="GO" id="GO:0006269">
    <property type="term" value="P:DNA replication, synthesis of primer"/>
    <property type="evidence" value="ECO:0000314"/>
    <property type="project" value="SGD"/>
</dbReference>
<dbReference type="GO" id="GO:0006302">
    <property type="term" value="P:double-strand break repair"/>
    <property type="evidence" value="ECO:0000315"/>
    <property type="project" value="SGD"/>
</dbReference>
<dbReference type="CDD" id="cd07322">
    <property type="entry name" value="PriL_PriS_Eukaryotic"/>
    <property type="match status" value="1"/>
</dbReference>
<dbReference type="FunFam" id="1.20.930.80:FF:000005">
    <property type="entry name" value="DNA primase large subunit"/>
    <property type="match status" value="1"/>
</dbReference>
<dbReference type="Gene3D" id="1.20.930.80">
    <property type="match status" value="1"/>
</dbReference>
<dbReference type="InterPro" id="IPR016558">
    <property type="entry name" value="DNA_primase_lsu_euk"/>
</dbReference>
<dbReference type="InterPro" id="IPR007238">
    <property type="entry name" value="DNA_primase_lsu_euk/arc"/>
</dbReference>
<dbReference type="PANTHER" id="PTHR10537">
    <property type="entry name" value="DNA PRIMASE LARGE SUBUNIT"/>
    <property type="match status" value="1"/>
</dbReference>
<dbReference type="PANTHER" id="PTHR10537:SF3">
    <property type="entry name" value="DNA PRIMASE LARGE SUBUNIT"/>
    <property type="match status" value="1"/>
</dbReference>
<dbReference type="Pfam" id="PF04104">
    <property type="entry name" value="DNA_primase_lrg"/>
    <property type="match status" value="1"/>
</dbReference>
<dbReference type="PIRSF" id="PIRSF009449">
    <property type="entry name" value="DNA_primase_large_subunit"/>
    <property type="match status" value="1"/>
</dbReference>
<gene>
    <name type="primary">PRI2</name>
    <name type="ordered locus">YKL045W</name>
    <name type="ORF">YKL258</name>
</gene>
<feature type="chain" id="PRO_0000046776" description="DNA primase large subunit">
    <location>
        <begin position="1"/>
        <end position="528"/>
    </location>
</feature>
<feature type="region of interest" description="H-T-H-like motif" evidence="1">
    <location>
        <begin position="210"/>
        <end position="239"/>
    </location>
</feature>
<feature type="binding site" evidence="5">
    <location>
        <position position="336"/>
    </location>
    <ligand>
        <name>[4Fe-4S] cluster</name>
        <dbReference type="ChEBI" id="CHEBI:49883"/>
    </ligand>
</feature>
<feature type="binding site" evidence="5">
    <location>
        <position position="417"/>
    </location>
    <ligand>
        <name>[4Fe-4S] cluster</name>
        <dbReference type="ChEBI" id="CHEBI:49883"/>
    </ligand>
</feature>
<feature type="binding site" evidence="5">
    <location>
        <position position="434"/>
    </location>
    <ligand>
        <name>[4Fe-4S] cluster</name>
        <dbReference type="ChEBI" id="CHEBI:49883"/>
    </ligand>
</feature>
<feature type="binding site" evidence="5">
    <location>
        <position position="474"/>
    </location>
    <ligand>
        <name>[4Fe-4S] cluster</name>
        <dbReference type="ChEBI" id="CHEBI:49883"/>
    </ligand>
</feature>
<feature type="mutagenesis site" description="Temperature-sensitive." evidence="4">
    <original>E</original>
    <variation>Q</variation>
    <location>
        <position position="152"/>
    </location>
</feature>
<feature type="mutagenesis site" description="Mild disruption of iron-sulfur-binding. Strong disruption of iron-sulfur-binding; when associated with S-474. Strong disruption of iron-sulfur-binding, leading to destabilization of the protein and preventing its purification; when associated with S-417 or S-434." evidence="3">
    <original>C</original>
    <variation>S</variation>
    <location>
        <position position="336"/>
    </location>
</feature>
<feature type="mutagenesis site" description="Lethal." evidence="4">
    <original>H</original>
    <variation>S</variation>
    <location>
        <position position="401"/>
    </location>
</feature>
<feature type="mutagenesis site" description="Mild disruption of iron-sulfur-binding. Strong disruption of iron-sulfur-binding, leading to destabilization of the protein and preventing its purification; when associated with S-336." evidence="3">
    <original>C</original>
    <variation>S</variation>
    <location>
        <position position="417"/>
    </location>
</feature>
<feature type="mutagenesis site" description="Mild disruption of iron-sulfur-binding. Strong disruption of iron-sulfur-binding, leading to destabilization of the protein and preventing its purification; when associated with S-336." evidence="3">
    <original>C</original>
    <variation>S</variation>
    <location>
        <position position="434"/>
    </location>
</feature>
<feature type="mutagenesis site" description="Temperature-sensitive." evidence="3">
    <original>C</original>
    <variation>Y</variation>
    <location>
        <position position="434"/>
    </location>
</feature>
<feature type="mutagenesis site" description="Mild disruption of iron-sulfur-binding. Strong disruption of iron-sulfur-binding; when associated with S-336." evidence="3">
    <original>C</original>
    <variation>S</variation>
    <location>
        <position position="474"/>
    </location>
</feature>
<feature type="strand" evidence="8">
    <location>
        <begin position="318"/>
        <end position="320"/>
    </location>
</feature>
<feature type="helix" evidence="8">
    <location>
        <begin position="323"/>
        <end position="325"/>
    </location>
</feature>
<feature type="helix" evidence="8">
    <location>
        <begin position="327"/>
        <end position="330"/>
    </location>
</feature>
<feature type="helix" evidence="8">
    <location>
        <begin position="335"/>
        <end position="347"/>
    </location>
</feature>
<feature type="helix" evidence="8">
    <location>
        <begin position="352"/>
        <end position="365"/>
    </location>
</feature>
<feature type="helix" evidence="8">
    <location>
        <begin position="369"/>
        <end position="381"/>
    </location>
</feature>
<feature type="helix" evidence="8">
    <location>
        <begin position="382"/>
        <end position="384"/>
    </location>
</feature>
<feature type="helix" evidence="8">
    <location>
        <begin position="388"/>
        <end position="394"/>
    </location>
</feature>
<feature type="helix" evidence="8">
    <location>
        <begin position="396"/>
        <end position="402"/>
    </location>
</feature>
<feature type="turn" evidence="8">
    <location>
        <begin position="403"/>
        <end position="406"/>
    </location>
</feature>
<feature type="helix" evidence="8">
    <location>
        <begin position="417"/>
        <end position="422"/>
    </location>
</feature>
<feature type="helix" evidence="8">
    <location>
        <begin position="435"/>
        <end position="438"/>
    </location>
</feature>
<feature type="helix" evidence="8">
    <location>
        <begin position="441"/>
        <end position="450"/>
    </location>
</feature>
<feature type="helix" evidence="8">
    <location>
        <begin position="455"/>
        <end position="466"/>
    </location>
</feature>
<feature type="helix" evidence="8">
    <location>
        <begin position="470"/>
        <end position="481"/>
    </location>
</feature>
<feature type="helix" evidence="8">
    <location>
        <begin position="500"/>
        <end position="509"/>
    </location>
</feature>
<reference key="1">
    <citation type="journal article" date="1989" name="Mol. Cell. Biol.">
        <title>A single essential gene, PRI2, encodes the large subunit of DNA primase in Saccharomyces cerevisiae.</title>
        <authorList>
            <person name="Foiani M."/>
            <person name="Santocanale C."/>
            <person name="Plevani P."/>
            <person name="Lucchini G."/>
        </authorList>
    </citation>
    <scope>NUCLEOTIDE SEQUENCE [GENOMIC DNA]</scope>
</reference>
<reference key="2">
    <citation type="journal article" date="1993" name="Yeast">
        <title>The sequence of a 17.5 kb DNA fragment on the left arm of yeast chromosome XI identifies the protein kinase gene ELM1, the DNA primase gene PRI2, a new gene encoding a putative histone and seven new open reading frames.</title>
        <authorList>
            <person name="Purnelle B."/>
            <person name="Tettelin H."/>
            <person name="van Dyck L."/>
            <person name="Skala J."/>
            <person name="Goffeau A."/>
        </authorList>
    </citation>
    <scope>NUCLEOTIDE SEQUENCE [GENOMIC DNA]</scope>
    <source>
        <strain>ATCC 204508 / S288c</strain>
    </source>
</reference>
<reference key="3">
    <citation type="journal article" date="1994" name="Nature">
        <title>Complete DNA sequence of yeast chromosome XI.</title>
        <authorList>
            <person name="Dujon B."/>
            <person name="Alexandraki D."/>
            <person name="Andre B."/>
            <person name="Ansorge W."/>
            <person name="Baladron V."/>
            <person name="Ballesta J.P.G."/>
            <person name="Banrevi A."/>
            <person name="Bolle P.-A."/>
            <person name="Bolotin-Fukuhara M."/>
            <person name="Bossier P."/>
            <person name="Bou G."/>
            <person name="Boyer J."/>
            <person name="Buitrago M.J."/>
            <person name="Cheret G."/>
            <person name="Colleaux L."/>
            <person name="Daignan-Fornier B."/>
            <person name="del Rey F."/>
            <person name="Dion C."/>
            <person name="Domdey H."/>
            <person name="Duesterhoeft A."/>
            <person name="Duesterhus S."/>
            <person name="Entian K.-D."/>
            <person name="Erfle H."/>
            <person name="Esteban P.F."/>
            <person name="Feldmann H."/>
            <person name="Fernandes L."/>
            <person name="Fobo G.M."/>
            <person name="Fritz C."/>
            <person name="Fukuhara H."/>
            <person name="Gabel C."/>
            <person name="Gaillon L."/>
            <person name="Garcia-Cantalejo J.M."/>
            <person name="Garcia-Ramirez J.J."/>
            <person name="Gent M.E."/>
            <person name="Ghazvini M."/>
            <person name="Goffeau A."/>
            <person name="Gonzalez A."/>
            <person name="Grothues D."/>
            <person name="Guerreiro P."/>
            <person name="Hegemann J.H."/>
            <person name="Hewitt N."/>
            <person name="Hilger F."/>
            <person name="Hollenberg C.P."/>
            <person name="Horaitis O."/>
            <person name="Indge K.J."/>
            <person name="Jacquier A."/>
            <person name="James C.M."/>
            <person name="Jauniaux J.-C."/>
            <person name="Jimenez A."/>
            <person name="Keuchel H."/>
            <person name="Kirchrath L."/>
            <person name="Kleine K."/>
            <person name="Koetter P."/>
            <person name="Legrain P."/>
            <person name="Liebl S."/>
            <person name="Louis E.J."/>
            <person name="Maia e Silva A."/>
            <person name="Marck C."/>
            <person name="Monnier A.-L."/>
            <person name="Moestl D."/>
            <person name="Mueller S."/>
            <person name="Obermaier B."/>
            <person name="Oliver S.G."/>
            <person name="Pallier C."/>
            <person name="Pascolo S."/>
            <person name="Pfeiffer F."/>
            <person name="Philippsen P."/>
            <person name="Planta R.J."/>
            <person name="Pohl F.M."/>
            <person name="Pohl T.M."/>
            <person name="Poehlmann R."/>
            <person name="Portetelle D."/>
            <person name="Purnelle B."/>
            <person name="Puzos V."/>
            <person name="Ramezani Rad M."/>
            <person name="Rasmussen S.W."/>
            <person name="Remacha M.A."/>
            <person name="Revuelta J.L."/>
            <person name="Richard G.-F."/>
            <person name="Rieger M."/>
            <person name="Rodrigues-Pousada C."/>
            <person name="Rose M."/>
            <person name="Rupp T."/>
            <person name="Santos M.A."/>
            <person name="Schwager C."/>
            <person name="Sensen C."/>
            <person name="Skala J."/>
            <person name="Soares H."/>
            <person name="Sor F."/>
            <person name="Stegemann J."/>
            <person name="Tettelin H."/>
            <person name="Thierry A."/>
            <person name="Tzermia M."/>
            <person name="Urrestarazu L.A."/>
            <person name="van Dyck L."/>
            <person name="van Vliet-Reedijk J.C."/>
            <person name="Valens M."/>
            <person name="Vandenbol M."/>
            <person name="Vilela C."/>
            <person name="Vissers S."/>
            <person name="von Wettstein D."/>
            <person name="Voss H."/>
            <person name="Wiemann S."/>
            <person name="Xu G."/>
            <person name="Zimmermann J."/>
            <person name="Haasemann M."/>
            <person name="Becker I."/>
            <person name="Mewes H.-W."/>
        </authorList>
    </citation>
    <scope>NUCLEOTIDE SEQUENCE [LARGE SCALE GENOMIC DNA]</scope>
    <source>
        <strain>ATCC 204508 / S288c</strain>
    </source>
</reference>
<reference key="4">
    <citation type="journal article" date="2014" name="G3 (Bethesda)">
        <title>The reference genome sequence of Saccharomyces cerevisiae: Then and now.</title>
        <authorList>
            <person name="Engel S.R."/>
            <person name="Dietrich F.S."/>
            <person name="Fisk D.G."/>
            <person name="Binkley G."/>
            <person name="Balakrishnan R."/>
            <person name="Costanzo M.C."/>
            <person name="Dwight S.S."/>
            <person name="Hitz B.C."/>
            <person name="Karra K."/>
            <person name="Nash R.S."/>
            <person name="Weng S."/>
            <person name="Wong E.D."/>
            <person name="Lloyd P."/>
            <person name="Skrzypek M.S."/>
            <person name="Miyasato S.R."/>
            <person name="Simison M."/>
            <person name="Cherry J.M."/>
        </authorList>
    </citation>
    <scope>GENOME REANNOTATION</scope>
    <source>
        <strain>ATCC 204508 / S288c</strain>
    </source>
</reference>
<reference key="5">
    <citation type="journal article" date="1988" name="Biochim. Biophys. Acta">
        <title>The yeast DNA polymerase-primase complex: genes and proteins.</title>
        <authorList>
            <person name="Plevani P."/>
            <person name="Foiani M."/>
            <person name="Muzi Falconi M."/>
            <person name="Pizzagalli A."/>
            <person name="Santocanale C."/>
            <person name="Francesconi S."/>
            <person name="Valsasnini P."/>
            <person name="Comedini A."/>
            <person name="Piatti S."/>
            <person name="Lucchini G."/>
        </authorList>
    </citation>
    <scope>COMPOSITION OF THE DNA POLYMERASE ALPHA:PRIMASE COMPLEX</scope>
</reference>
<reference key="6">
    <citation type="journal article" date="1991" name="Proc. Natl. Acad. Sci. U.S.A.">
        <title>Mutations in conserved yeast DNA primase domains impair DNA replication in vivo.</title>
        <authorList>
            <person name="Francesconi S."/>
            <person name="Longhese M.P."/>
            <person name="Piseri A."/>
            <person name="Santocanale C."/>
            <person name="Lucchini G."/>
            <person name="Plevani P."/>
        </authorList>
    </citation>
    <scope>MUTAGENESIS</scope>
</reference>
<reference key="7">
    <citation type="journal article" date="2006" name="J. Biol. Chem.">
        <title>A conserved Hsp10-like domain in Mcm10 is required to stabilize the catalytic subunit of DNA polymerase-alpha in budding yeast.</title>
        <authorList>
            <person name="Ricke R.M."/>
            <person name="Bielinsky A.-K."/>
        </authorList>
    </citation>
    <scope>INTERACTION WITH MCM10</scope>
</reference>
<reference key="8">
    <citation type="journal article" date="2007" name="Nat. Struct. Mol. Biol.">
        <title>An iron-sulfur domain of the eukaryotic primase is essential for RNA primer synthesis.</title>
        <authorList>
            <person name="Klinge S."/>
            <person name="Hirst J."/>
            <person name="Maman J.D."/>
            <person name="Krude T."/>
            <person name="Pellegrini L."/>
        </authorList>
    </citation>
    <scope>IRON-SULFUR-BINDING</scope>
    <scope>COFACTOR</scope>
    <scope>MUTAGENESIS OF CYS-336; CYS-417; CYS-434 AND CYS-474</scope>
</reference>
<reference key="9">
    <citation type="journal article" date="2010" name="PLoS ONE">
        <title>Shared active site architecture between the large subunit of eukaryotic primase and DNA photolyase.</title>
        <authorList>
            <person name="Sauguet L."/>
            <person name="Klinge S."/>
            <person name="Perera R.L."/>
            <person name="Maman J.D."/>
            <person name="Pellegrini L."/>
        </authorList>
    </citation>
    <scope>X-RAY CRYSTALLOGRAPHY (1.54 ANGSTROMS) OF 317-512 IN COMPLEX WITH IRON-SULFUR</scope>
</reference>
<sequence length="528" mass="62263">MFRQSKRRIASRKNFSSYDDIVKSELDVGNTNAANQIILSSSSSEEEKKLYARLYESKLSFYDLPPQGEITLEQFEIWAIDRLKILLEIESCLSRNKSIKEIETIIKPQFQKLLPFNTESLEDRKKDYYSHFILRLCFCRSKELREKFVRAETFLFKIRFNMLTSTDQTKFVQSLDLPLLQFISNEEKAELSHQLYQTVSASLQFQLNLNEEHQRKQYFQQEKFIKLPFENVIELVGNRLVFLKDGYAYLPQFQQLNLLSNEFASKLNQELIKTYQYLPRLNEDDRLLPILNHLSSGYTIADFNQQKANQFSENVDDEINAQSVWSEEISSNYPLCIKNLMEGLKKNHHLRYYGRQQLSLFLKGIGLSADEALKFWSEAFTRNGNMTMEKFNKEYRYSFRHNYGLEGNRINYKPWDCHTILSKPRPGRGDYHGCPFRDWSHERLSAELRSMKLTQAQIISVLDSCQKGEYTIACTKVFEMTHNSASADLEIGEQTHIAHPNLYFERSRQLQKKQQKLEKEKLFNNGNH</sequence>
<proteinExistence type="evidence at protein level"/>
<keyword id="KW-0002">3D-structure</keyword>
<keyword id="KW-0004">4Fe-4S</keyword>
<keyword id="KW-0235">DNA replication</keyword>
<keyword id="KW-0238">DNA-binding</keyword>
<keyword id="KW-0408">Iron</keyword>
<keyword id="KW-0411">Iron-sulfur</keyword>
<keyword id="KW-0479">Metal-binding</keyword>
<keyword id="KW-0639">Primosome</keyword>
<keyword id="KW-1185">Reference proteome</keyword>
<comment type="function">
    <text>DNA primase is the polymerase that synthesizes small RNA primers for the Okazaki fragments made during discontinuous DNA replication. In a complex with DNA polymerase alpha (DNA polymerase alpha:primase) constitutes a replicative polymerase. Both primase components participate in formation of the active center, but the ATP-binding site is exclusively located on p48.</text>
</comment>
<comment type="cofactor">
    <cofactor evidence="3">
        <name>[4Fe-4S] cluster</name>
        <dbReference type="ChEBI" id="CHEBI:49883"/>
    </cofactor>
    <text evidence="3">Binds 1 [4Fe-4S] cluster.</text>
</comment>
<comment type="subunit">
    <text evidence="2 6">DNA polymerase alpha:primase is a four subunit enzyme complex, which is assembled throughout the cell cycle, and consists of the two DNA polymerase subunits A POL1 and B POL12, and the DNA primase large PRI2 and small PRI1 subunits (PubMed:3061469). Interacts with MCM10 (PubMed:16675460).</text>
</comment>
<comment type="developmental stage">
    <text>Fluctuates in amount during the cell cycle.</text>
</comment>
<comment type="similarity">
    <text evidence="7">Belongs to the eukaryotic-type primase large subunit family.</text>
</comment>
<evidence type="ECO:0000255" key="1"/>
<evidence type="ECO:0000269" key="2">
    <source>
    </source>
</evidence>
<evidence type="ECO:0000269" key="3">
    <source>
    </source>
</evidence>
<evidence type="ECO:0000269" key="4">
    <source>
    </source>
</evidence>
<evidence type="ECO:0000269" key="5">
    <source>
    </source>
</evidence>
<evidence type="ECO:0000269" key="6">
    <source>
    </source>
</evidence>
<evidence type="ECO:0000305" key="7"/>
<evidence type="ECO:0007829" key="8">
    <source>
        <dbReference type="PDB" id="6DTV"/>
    </source>
</evidence>
<accession>P20457</accession>
<accession>D6VXP2</accession>
<organism>
    <name type="scientific">Saccharomyces cerevisiae (strain ATCC 204508 / S288c)</name>
    <name type="common">Baker's yeast</name>
    <dbReference type="NCBI Taxonomy" id="559292"/>
    <lineage>
        <taxon>Eukaryota</taxon>
        <taxon>Fungi</taxon>
        <taxon>Dikarya</taxon>
        <taxon>Ascomycota</taxon>
        <taxon>Saccharomycotina</taxon>
        <taxon>Saccharomycetes</taxon>
        <taxon>Saccharomycetales</taxon>
        <taxon>Saccharomycetaceae</taxon>
        <taxon>Saccharomyces</taxon>
    </lineage>
</organism>
<protein>
    <recommendedName>
        <fullName>DNA primase large subunit</fullName>
    </recommendedName>
    <alternativeName>
        <fullName>DNA polymerase alpha:primase complex p58 subunit</fullName>
        <shortName>DNA polymerase-primase complex p58 subunit</shortName>
        <shortName>Pol alpha-primase complex p58 subunit</shortName>
    </alternativeName>
    <alternativeName>
        <fullName>DNA primase 58 kDa subunit</fullName>
    </alternativeName>
</protein>
<name>PRI2_YEAST</name>